<reference key="1">
    <citation type="journal article" date="1998" name="Nature">
        <title>Analysis of 1.9 Mb of contiguous sequence from chromosome 4 of Arabidopsis thaliana.</title>
        <authorList>
            <person name="Bevan M."/>
            <person name="Bancroft I."/>
            <person name="Bent E."/>
            <person name="Love K."/>
            <person name="Goodman H.M."/>
            <person name="Dean C."/>
            <person name="Bergkamp R."/>
            <person name="Dirkse W."/>
            <person name="van Staveren M."/>
            <person name="Stiekema W."/>
            <person name="Drost L."/>
            <person name="Ridley P."/>
            <person name="Hudson S.-A."/>
            <person name="Patel K."/>
            <person name="Murphy G."/>
            <person name="Piffanelli P."/>
            <person name="Wedler H."/>
            <person name="Wedler E."/>
            <person name="Wambutt R."/>
            <person name="Weitzenegger T."/>
            <person name="Pohl T."/>
            <person name="Terryn N."/>
            <person name="Gielen J."/>
            <person name="Villarroel R."/>
            <person name="De Clercq R."/>
            <person name="van Montagu M."/>
            <person name="Lecharny A."/>
            <person name="Aubourg S."/>
            <person name="Gy I."/>
            <person name="Kreis M."/>
            <person name="Lao N."/>
            <person name="Kavanagh T."/>
            <person name="Hempel S."/>
            <person name="Kotter P."/>
            <person name="Entian K.-D."/>
            <person name="Rieger M."/>
            <person name="Schaefer M."/>
            <person name="Funk B."/>
            <person name="Mueller-Auer S."/>
            <person name="Silvey M."/>
            <person name="James R."/>
            <person name="Monfort A."/>
            <person name="Pons A."/>
            <person name="Puigdomenech P."/>
            <person name="Douka A."/>
            <person name="Voukelatou E."/>
            <person name="Milioni D."/>
            <person name="Hatzopoulos P."/>
            <person name="Piravandi E."/>
            <person name="Obermaier B."/>
            <person name="Hilbert H."/>
            <person name="Duesterhoeft A."/>
            <person name="Moores T."/>
            <person name="Jones J.D.G."/>
            <person name="Eneva T."/>
            <person name="Palme K."/>
            <person name="Benes V."/>
            <person name="Rechmann S."/>
            <person name="Ansorge W."/>
            <person name="Cooke R."/>
            <person name="Berger C."/>
            <person name="Delseny M."/>
            <person name="Voet M."/>
            <person name="Volckaert G."/>
            <person name="Mewes H.-W."/>
            <person name="Klosterman S."/>
            <person name="Schueller C."/>
            <person name="Chalwatzis N."/>
        </authorList>
    </citation>
    <scope>NUCLEOTIDE SEQUENCE [LARGE SCALE GENOMIC DNA]</scope>
    <source>
        <strain>cv. Columbia</strain>
    </source>
</reference>
<reference key="2">
    <citation type="journal article" date="1999" name="Nature">
        <title>Sequence and analysis of chromosome 4 of the plant Arabidopsis thaliana.</title>
        <authorList>
            <person name="Mayer K.F.X."/>
            <person name="Schueller C."/>
            <person name="Wambutt R."/>
            <person name="Murphy G."/>
            <person name="Volckaert G."/>
            <person name="Pohl T."/>
            <person name="Duesterhoeft A."/>
            <person name="Stiekema W."/>
            <person name="Entian K.-D."/>
            <person name="Terryn N."/>
            <person name="Harris B."/>
            <person name="Ansorge W."/>
            <person name="Brandt P."/>
            <person name="Grivell L.A."/>
            <person name="Rieger M."/>
            <person name="Weichselgartner M."/>
            <person name="de Simone V."/>
            <person name="Obermaier B."/>
            <person name="Mache R."/>
            <person name="Mueller M."/>
            <person name="Kreis M."/>
            <person name="Delseny M."/>
            <person name="Puigdomenech P."/>
            <person name="Watson M."/>
            <person name="Schmidtheini T."/>
            <person name="Reichert B."/>
            <person name="Portetelle D."/>
            <person name="Perez-Alonso M."/>
            <person name="Boutry M."/>
            <person name="Bancroft I."/>
            <person name="Vos P."/>
            <person name="Hoheisel J."/>
            <person name="Zimmermann W."/>
            <person name="Wedler H."/>
            <person name="Ridley P."/>
            <person name="Langham S.-A."/>
            <person name="McCullagh B."/>
            <person name="Bilham L."/>
            <person name="Robben J."/>
            <person name="van der Schueren J."/>
            <person name="Grymonprez B."/>
            <person name="Chuang Y.-J."/>
            <person name="Vandenbussche F."/>
            <person name="Braeken M."/>
            <person name="Weltjens I."/>
            <person name="Voet M."/>
            <person name="Bastiaens I."/>
            <person name="Aert R."/>
            <person name="Defoor E."/>
            <person name="Weitzenegger T."/>
            <person name="Bothe G."/>
            <person name="Ramsperger U."/>
            <person name="Hilbert H."/>
            <person name="Braun M."/>
            <person name="Holzer E."/>
            <person name="Brandt A."/>
            <person name="Peters S."/>
            <person name="van Staveren M."/>
            <person name="Dirkse W."/>
            <person name="Mooijman P."/>
            <person name="Klein Lankhorst R."/>
            <person name="Rose M."/>
            <person name="Hauf J."/>
            <person name="Koetter P."/>
            <person name="Berneiser S."/>
            <person name="Hempel S."/>
            <person name="Feldpausch M."/>
            <person name="Lamberth S."/>
            <person name="Van den Daele H."/>
            <person name="De Keyser A."/>
            <person name="Buysshaert C."/>
            <person name="Gielen J."/>
            <person name="Villarroel R."/>
            <person name="De Clercq R."/>
            <person name="van Montagu M."/>
            <person name="Rogers J."/>
            <person name="Cronin A."/>
            <person name="Quail M.A."/>
            <person name="Bray-Allen S."/>
            <person name="Clark L."/>
            <person name="Doggett J."/>
            <person name="Hall S."/>
            <person name="Kay M."/>
            <person name="Lennard N."/>
            <person name="McLay K."/>
            <person name="Mayes R."/>
            <person name="Pettett A."/>
            <person name="Rajandream M.A."/>
            <person name="Lyne M."/>
            <person name="Benes V."/>
            <person name="Rechmann S."/>
            <person name="Borkova D."/>
            <person name="Bloecker H."/>
            <person name="Scharfe M."/>
            <person name="Grimm M."/>
            <person name="Loehnert T.-H."/>
            <person name="Dose S."/>
            <person name="de Haan M."/>
            <person name="Maarse A.C."/>
            <person name="Schaefer M."/>
            <person name="Mueller-Auer S."/>
            <person name="Gabel C."/>
            <person name="Fuchs M."/>
            <person name="Fartmann B."/>
            <person name="Granderath K."/>
            <person name="Dauner D."/>
            <person name="Herzl A."/>
            <person name="Neumann S."/>
            <person name="Argiriou A."/>
            <person name="Vitale D."/>
            <person name="Liguori R."/>
            <person name="Piravandi E."/>
            <person name="Massenet O."/>
            <person name="Quigley F."/>
            <person name="Clabauld G."/>
            <person name="Muendlein A."/>
            <person name="Felber R."/>
            <person name="Schnabl S."/>
            <person name="Hiller R."/>
            <person name="Schmidt W."/>
            <person name="Lecharny A."/>
            <person name="Aubourg S."/>
            <person name="Chefdor F."/>
            <person name="Cooke R."/>
            <person name="Berger C."/>
            <person name="Monfort A."/>
            <person name="Casacuberta E."/>
            <person name="Gibbons T."/>
            <person name="Weber N."/>
            <person name="Vandenbol M."/>
            <person name="Bargues M."/>
            <person name="Terol J."/>
            <person name="Torres A."/>
            <person name="Perez-Perez A."/>
            <person name="Purnelle B."/>
            <person name="Bent E."/>
            <person name="Johnson S."/>
            <person name="Tacon D."/>
            <person name="Jesse T."/>
            <person name="Heijnen L."/>
            <person name="Schwarz S."/>
            <person name="Scholler P."/>
            <person name="Heber S."/>
            <person name="Francs P."/>
            <person name="Bielke C."/>
            <person name="Frishman D."/>
            <person name="Haase D."/>
            <person name="Lemcke K."/>
            <person name="Mewes H.-W."/>
            <person name="Stocker S."/>
            <person name="Zaccaria P."/>
            <person name="Bevan M."/>
            <person name="Wilson R.K."/>
            <person name="de la Bastide M."/>
            <person name="Habermann K."/>
            <person name="Parnell L."/>
            <person name="Dedhia N."/>
            <person name="Gnoj L."/>
            <person name="Schutz K."/>
            <person name="Huang E."/>
            <person name="Spiegel L."/>
            <person name="Sekhon M."/>
            <person name="Murray J."/>
            <person name="Sheet P."/>
            <person name="Cordes M."/>
            <person name="Abu-Threideh J."/>
            <person name="Stoneking T."/>
            <person name="Kalicki J."/>
            <person name="Graves T."/>
            <person name="Harmon G."/>
            <person name="Edwards J."/>
            <person name="Latreille P."/>
            <person name="Courtney L."/>
            <person name="Cloud J."/>
            <person name="Abbott A."/>
            <person name="Scott K."/>
            <person name="Johnson D."/>
            <person name="Minx P."/>
            <person name="Bentley D."/>
            <person name="Fulton B."/>
            <person name="Miller N."/>
            <person name="Greco T."/>
            <person name="Kemp K."/>
            <person name="Kramer J."/>
            <person name="Fulton L."/>
            <person name="Mardis E."/>
            <person name="Dante M."/>
            <person name="Pepin K."/>
            <person name="Hillier L.W."/>
            <person name="Nelson J."/>
            <person name="Spieth J."/>
            <person name="Ryan E."/>
            <person name="Andrews S."/>
            <person name="Geisel C."/>
            <person name="Layman D."/>
            <person name="Du H."/>
            <person name="Ali J."/>
            <person name="Berghoff A."/>
            <person name="Jones K."/>
            <person name="Drone K."/>
            <person name="Cotton M."/>
            <person name="Joshu C."/>
            <person name="Antonoiu B."/>
            <person name="Zidanic M."/>
            <person name="Strong C."/>
            <person name="Sun H."/>
            <person name="Lamar B."/>
            <person name="Yordan C."/>
            <person name="Ma P."/>
            <person name="Zhong J."/>
            <person name="Preston R."/>
            <person name="Vil D."/>
            <person name="Shekher M."/>
            <person name="Matero A."/>
            <person name="Shah R."/>
            <person name="Swaby I.K."/>
            <person name="O'Shaughnessy A."/>
            <person name="Rodriguez M."/>
            <person name="Hoffman J."/>
            <person name="Till S."/>
            <person name="Granat S."/>
            <person name="Shohdy N."/>
            <person name="Hasegawa A."/>
            <person name="Hameed A."/>
            <person name="Lodhi M."/>
            <person name="Johnson A."/>
            <person name="Chen E."/>
            <person name="Marra M.A."/>
            <person name="Martienssen R."/>
            <person name="McCombie W.R."/>
        </authorList>
    </citation>
    <scope>NUCLEOTIDE SEQUENCE [LARGE SCALE GENOMIC DNA]</scope>
    <source>
        <strain>cv. Columbia</strain>
    </source>
</reference>
<reference key="3">
    <citation type="journal article" date="2017" name="Plant J.">
        <title>Araport11: a complete reannotation of the Arabidopsis thaliana reference genome.</title>
        <authorList>
            <person name="Cheng C.Y."/>
            <person name="Krishnakumar V."/>
            <person name="Chan A.P."/>
            <person name="Thibaud-Nissen F."/>
            <person name="Schobel S."/>
            <person name="Town C.D."/>
        </authorList>
    </citation>
    <scope>GENOME REANNOTATION</scope>
    <source>
        <strain>cv. Columbia</strain>
    </source>
</reference>
<reference key="4">
    <citation type="journal article" date="2002" name="Mol. Genet. Genomics">
        <title>Genomic analysis of the terpenoid synthase (AtTPS) gene family of Arabidopsis thaliana.</title>
        <authorList>
            <person name="Aubourg S."/>
            <person name="Lecharny A."/>
            <person name="Bohlmann J."/>
        </authorList>
    </citation>
    <scope>GENE FAMILY</scope>
    <scope>NOMENCLATURE</scope>
</reference>
<reference key="5">
    <citation type="journal article" date="2003" name="Plant Cell">
        <title>Biosynthesis and emission of terpenoid volatiles from Arabidopsis flowers.</title>
        <authorList>
            <person name="Chen F."/>
            <person name="Tholl D."/>
            <person name="D'Auria J.C."/>
            <person name="Farooq A."/>
            <person name="Pichersky E."/>
            <person name="Gershenzon J."/>
        </authorList>
    </citation>
    <scope>TISSUE SPECIFICITY</scope>
</reference>
<reference key="6">
    <citation type="journal article" date="2003" name="Plant Mol. Biol.">
        <title>Genome organization in Arabidopsis thaliana: a survey for genes involved in isoprenoid and chlorophyll metabolism.</title>
        <authorList>
            <person name="Lange B.M."/>
            <person name="Ghassemian M."/>
        </authorList>
    </citation>
    <scope>GENE FAMILY</scope>
</reference>
<reference key="7">
    <citation type="journal article" date="2010" name="Plant Physiol.">
        <title>Variation of herbivore-induced volatile terpenes among Arabidopsis ecotypes depends on allelic differences and subcellular targeting of two terpene synthases, TPS02 and TPS03.</title>
        <authorList>
            <person name="Huang M."/>
            <person name="Abel C."/>
            <person name="Sohrabi R."/>
            <person name="Petri J."/>
            <person name="Haupt I."/>
            <person name="Cosimano J."/>
            <person name="Gershenzon J."/>
            <person name="Tholl D."/>
        </authorList>
    </citation>
    <scope>INDUCTION</scope>
    <scope>IDENTIFICATION OF FRAMESHIFT</scope>
    <source>
        <strain>cv. Columbia</strain>
        <strain>cv. Wassilewskija</strain>
    </source>
</reference>
<accession>P0CJ42</accession>
<accession>F4JMK2</accession>
<accession>O23516</accession>
<keyword id="KW-0150">Chloroplast</keyword>
<keyword id="KW-0934">Plastid</keyword>
<keyword id="KW-1185">Reference proteome</keyword>
<keyword id="KW-0809">Transit peptide</keyword>
<gene>
    <name type="primary">TPS02</name>
    <name type="ordered locus">At4g16730</name>
    <name type="ORF">dl4390w</name>
    <name type="ORF">FCAALL.15</name>
</gene>
<comment type="subcellular location">
    <subcellularLocation>
        <location evidence="4">Plastid</location>
        <location evidence="4">Chloroplast</location>
    </subcellularLocation>
</comment>
<comment type="tissue specificity">
    <text evidence="2">Expressed exclusively in flowers.</text>
</comment>
<comment type="induction">
    <text evidence="3">By coronalon.</text>
</comment>
<comment type="similarity">
    <text evidence="4">Belongs to the terpene synthase family. Tpsb subfamily.</text>
</comment>
<comment type="caution">
    <text evidence="4">Could be the product of a pseudogene. In strain cv. Columbia, a naturally frameshift at position 65 results in a truncated TPS02 protein. Lacks the conserved active sites, suggesting that it has no terpenoid synthase activity. A complete sequence for TPS02 can be found in strain cv. Wassilewskija (AC P0CJ43).</text>
</comment>
<comment type="sequence caution" evidence="4">
    <conflict type="erroneous gene model prediction">
        <sequence resource="EMBL-CDS" id="AEE83792"/>
    </conflict>
</comment>
<comment type="sequence caution" evidence="4">
    <conflict type="erroneous gene model prediction">
        <sequence resource="EMBL-CDS" id="CAB10448"/>
    </conflict>
</comment>
<comment type="sequence caution" evidence="4">
    <conflict type="erroneous gene model prediction">
        <sequence resource="EMBL-CDS" id="CAB78715"/>
    </conflict>
</comment>
<sequence length="66" mass="7773">MAAHNLCFNSAFVCNVHHQKTQHFPCNAVSKTTSTHAVTFHRRSANYRPPLWDHQYLLSLENIYMW</sequence>
<organism>
    <name type="scientific">Arabidopsis thaliana</name>
    <name type="common">Mouse-ear cress</name>
    <dbReference type="NCBI Taxonomy" id="3702"/>
    <lineage>
        <taxon>Eukaryota</taxon>
        <taxon>Viridiplantae</taxon>
        <taxon>Streptophyta</taxon>
        <taxon>Embryophyta</taxon>
        <taxon>Tracheophyta</taxon>
        <taxon>Spermatophyta</taxon>
        <taxon>Magnoliopsida</taxon>
        <taxon>eudicotyledons</taxon>
        <taxon>Gunneridae</taxon>
        <taxon>Pentapetalae</taxon>
        <taxon>rosids</taxon>
        <taxon>malvids</taxon>
        <taxon>Brassicales</taxon>
        <taxon>Brassicaceae</taxon>
        <taxon>Camelineae</taxon>
        <taxon>Arabidopsis</taxon>
    </lineage>
</organism>
<protein>
    <recommendedName>
        <fullName>Putative inactive (E)-beta-ocimene synthase, chloroplastic</fullName>
    </recommendedName>
    <alternativeName>
        <fullName>Inactive (E,E)-alpha-farnesene synthase</fullName>
    </alternativeName>
    <alternativeName>
        <fullName>Inactive terpenoid synthase 2</fullName>
        <shortName>AtTPS02</shortName>
    </alternativeName>
</protein>
<dbReference type="EMBL" id="Z97341">
    <property type="protein sequence ID" value="CAB10448.1"/>
    <property type="status" value="ALT_SEQ"/>
    <property type="molecule type" value="Genomic_DNA"/>
</dbReference>
<dbReference type="EMBL" id="AL161544">
    <property type="protein sequence ID" value="CAB78715.1"/>
    <property type="status" value="ALT_SEQ"/>
    <property type="molecule type" value="Genomic_DNA"/>
</dbReference>
<dbReference type="EMBL" id="CP002687">
    <property type="protein sequence ID" value="AEE83792.1"/>
    <property type="status" value="ALT_SEQ"/>
    <property type="molecule type" value="Genomic_DNA"/>
</dbReference>
<dbReference type="PIR" id="F71434">
    <property type="entry name" value="F71434"/>
</dbReference>
<dbReference type="RefSeq" id="NP_193406.3">
    <property type="nucleotide sequence ID" value="NM_117774.4"/>
</dbReference>
<dbReference type="STRING" id="3702.P0CJ42"/>
<dbReference type="GeneID" id="827376"/>
<dbReference type="KEGG" id="ath:AT4G16730"/>
<dbReference type="Araport" id="AT4G16730"/>
<dbReference type="TAIR" id="AT4G16730">
    <property type="gene designation" value="TPS02"/>
</dbReference>
<dbReference type="InParanoid" id="P0CJ42"/>
<dbReference type="Proteomes" id="UP000006548">
    <property type="component" value="Chromosome 4"/>
</dbReference>
<dbReference type="GO" id="GO:0009507">
    <property type="term" value="C:chloroplast"/>
    <property type="evidence" value="ECO:0007669"/>
    <property type="project" value="UniProtKB-SubCell"/>
</dbReference>
<proteinExistence type="uncertain"/>
<feature type="transit peptide" description="Chloroplast" evidence="1">
    <location>
        <begin position="1"/>
        <end position="25"/>
    </location>
</feature>
<feature type="chain" id="PRO_0000348423" description="Putative inactive (E)-beta-ocimene synthase, chloroplastic">
    <location>
        <begin position="26"/>
        <end position="66"/>
    </location>
</feature>
<name>OCISA_ARATH</name>
<evidence type="ECO:0000255" key="1"/>
<evidence type="ECO:0000269" key="2">
    <source>
    </source>
</evidence>
<evidence type="ECO:0000269" key="3">
    <source>
    </source>
</evidence>
<evidence type="ECO:0000305" key="4"/>